<protein>
    <recommendedName>
        <fullName evidence="1">GTPase Obg</fullName>
        <ecNumber evidence="1">3.6.5.-</ecNumber>
    </recommendedName>
    <alternativeName>
        <fullName evidence="1">GTP-binding protein Obg</fullName>
    </alternativeName>
</protein>
<keyword id="KW-0963">Cytoplasm</keyword>
<keyword id="KW-0342">GTP-binding</keyword>
<keyword id="KW-0378">Hydrolase</keyword>
<keyword id="KW-0460">Magnesium</keyword>
<keyword id="KW-0479">Metal-binding</keyword>
<keyword id="KW-0547">Nucleotide-binding</keyword>
<comment type="function">
    <text evidence="1">An essential GTPase which binds GTP, GDP and possibly (p)ppGpp with moderate affinity, with high nucleotide exchange rates and a fairly low GTP hydrolysis rate. Plays a role in control of the cell cycle, stress response, ribosome biogenesis and in those bacteria that undergo differentiation, in morphogenesis control.</text>
</comment>
<comment type="cofactor">
    <cofactor evidence="1">
        <name>Mg(2+)</name>
        <dbReference type="ChEBI" id="CHEBI:18420"/>
    </cofactor>
</comment>
<comment type="subunit">
    <text evidence="1">Monomer.</text>
</comment>
<comment type="subcellular location">
    <subcellularLocation>
        <location evidence="1">Cytoplasm</location>
    </subcellularLocation>
</comment>
<comment type="similarity">
    <text evidence="1">Belongs to the TRAFAC class OBG-HflX-like GTPase superfamily. OBG GTPase family.</text>
</comment>
<feature type="chain" id="PRO_0000385979" description="GTPase Obg">
    <location>
        <begin position="1"/>
        <end position="437"/>
    </location>
</feature>
<feature type="domain" description="Obg" evidence="3">
    <location>
        <begin position="2"/>
        <end position="161"/>
    </location>
</feature>
<feature type="domain" description="OBG-type G" evidence="1">
    <location>
        <begin position="162"/>
        <end position="335"/>
    </location>
</feature>
<feature type="domain" description="OCT" evidence="2">
    <location>
        <begin position="355"/>
        <end position="433"/>
    </location>
</feature>
<feature type="binding site" evidence="1">
    <location>
        <begin position="168"/>
        <end position="175"/>
    </location>
    <ligand>
        <name>GTP</name>
        <dbReference type="ChEBI" id="CHEBI:37565"/>
    </ligand>
</feature>
<feature type="binding site" evidence="1">
    <location>
        <position position="175"/>
    </location>
    <ligand>
        <name>Mg(2+)</name>
        <dbReference type="ChEBI" id="CHEBI:18420"/>
    </ligand>
</feature>
<feature type="binding site" evidence="1">
    <location>
        <begin position="193"/>
        <end position="197"/>
    </location>
    <ligand>
        <name>GTP</name>
        <dbReference type="ChEBI" id="CHEBI:37565"/>
    </ligand>
</feature>
<feature type="binding site" evidence="1">
    <location>
        <position position="195"/>
    </location>
    <ligand>
        <name>Mg(2+)</name>
        <dbReference type="ChEBI" id="CHEBI:18420"/>
    </ligand>
</feature>
<feature type="binding site" evidence="1">
    <location>
        <begin position="214"/>
        <end position="217"/>
    </location>
    <ligand>
        <name>GTP</name>
        <dbReference type="ChEBI" id="CHEBI:37565"/>
    </ligand>
</feature>
<feature type="binding site" evidence="1">
    <location>
        <begin position="284"/>
        <end position="287"/>
    </location>
    <ligand>
        <name>GTP</name>
        <dbReference type="ChEBI" id="CHEBI:37565"/>
    </ligand>
</feature>
<feature type="binding site" evidence="1">
    <location>
        <begin position="316"/>
        <end position="318"/>
    </location>
    <ligand>
        <name>GTP</name>
        <dbReference type="ChEBI" id="CHEBI:37565"/>
    </ligand>
</feature>
<organism>
    <name type="scientific">Herpetosiphon aurantiacus (strain ATCC 23779 / DSM 785 / 114-95)</name>
    <dbReference type="NCBI Taxonomy" id="316274"/>
    <lineage>
        <taxon>Bacteria</taxon>
        <taxon>Bacillati</taxon>
        <taxon>Chloroflexota</taxon>
        <taxon>Chloroflexia</taxon>
        <taxon>Herpetosiphonales</taxon>
        <taxon>Herpetosiphonaceae</taxon>
        <taxon>Herpetosiphon</taxon>
    </lineage>
</organism>
<sequence length="437" mass="47945">MSDFIDRALITVKAGDGGDGMATFRREKYVPRGGPDGGDGGRGGSVYLEVSPHLNTLLPFRFETHFEADKGLNAGRQRKRGRTGEDTFIRVPPGTIVSAEIEGEVQTVDLLFPGQKLLVARGGKGGLGNTHFATASNQVPRIAELGQPGEERELQLELKVIADVGLVGFPNAGKSTLLSMVSAARPKIANYPFTTLSPNLGVAEFNDFTFVVADIPGLIEGASRGVGLGHDFLRHIERTRILVHVLDAAGTEGRDPFEDFLTINAELKAYSSELAQRPQLVALNKTDIPDAEAFDELMRPQIIAWGIDPENIFPISAATNQGLQPLQRRIVDILREMPERITRLPYSEEILTFRFSNIDPNDFWLETEEDGVLRVHGEKIERLVSMTNFAQSESLERLQRVLEAMGVSAALFAAGVRHGDPVRIEKAELLWQDESIG</sequence>
<name>OBG_HERA2</name>
<dbReference type="EC" id="3.6.5.-" evidence="1"/>
<dbReference type="EMBL" id="CP000875">
    <property type="protein sequence ID" value="ABX06859.1"/>
    <property type="molecule type" value="Genomic_DNA"/>
</dbReference>
<dbReference type="SMR" id="A9AXD9"/>
<dbReference type="FunCoup" id="A9AXD9">
    <property type="interactions" value="462"/>
</dbReference>
<dbReference type="STRING" id="316274.Haur_4227"/>
<dbReference type="KEGG" id="hau:Haur_4227"/>
<dbReference type="eggNOG" id="COG0536">
    <property type="taxonomic scope" value="Bacteria"/>
</dbReference>
<dbReference type="HOGENOM" id="CLU_011747_2_0_0"/>
<dbReference type="InParanoid" id="A9AXD9"/>
<dbReference type="Proteomes" id="UP000000787">
    <property type="component" value="Chromosome"/>
</dbReference>
<dbReference type="GO" id="GO:0005737">
    <property type="term" value="C:cytoplasm"/>
    <property type="evidence" value="ECO:0007669"/>
    <property type="project" value="UniProtKB-SubCell"/>
</dbReference>
<dbReference type="GO" id="GO:0005525">
    <property type="term" value="F:GTP binding"/>
    <property type="evidence" value="ECO:0007669"/>
    <property type="project" value="UniProtKB-UniRule"/>
</dbReference>
<dbReference type="GO" id="GO:0003924">
    <property type="term" value="F:GTPase activity"/>
    <property type="evidence" value="ECO:0007669"/>
    <property type="project" value="UniProtKB-UniRule"/>
</dbReference>
<dbReference type="GO" id="GO:0000287">
    <property type="term" value="F:magnesium ion binding"/>
    <property type="evidence" value="ECO:0007669"/>
    <property type="project" value="InterPro"/>
</dbReference>
<dbReference type="GO" id="GO:0042254">
    <property type="term" value="P:ribosome biogenesis"/>
    <property type="evidence" value="ECO:0007669"/>
    <property type="project" value="UniProtKB-UniRule"/>
</dbReference>
<dbReference type="CDD" id="cd01898">
    <property type="entry name" value="Obg"/>
    <property type="match status" value="1"/>
</dbReference>
<dbReference type="FunFam" id="2.70.210.12:FF:000001">
    <property type="entry name" value="GTPase Obg"/>
    <property type="match status" value="1"/>
</dbReference>
<dbReference type="Gene3D" id="3.30.300.350">
    <property type="entry name" value="GTP-binding protein OBG, C-terminal domain"/>
    <property type="match status" value="1"/>
</dbReference>
<dbReference type="Gene3D" id="2.70.210.12">
    <property type="entry name" value="GTP1/OBG domain"/>
    <property type="match status" value="1"/>
</dbReference>
<dbReference type="Gene3D" id="3.40.50.300">
    <property type="entry name" value="P-loop containing nucleotide triphosphate hydrolases"/>
    <property type="match status" value="1"/>
</dbReference>
<dbReference type="HAMAP" id="MF_01454">
    <property type="entry name" value="GTPase_Obg"/>
    <property type="match status" value="1"/>
</dbReference>
<dbReference type="InterPro" id="IPR031167">
    <property type="entry name" value="G_OBG"/>
</dbReference>
<dbReference type="InterPro" id="IPR006073">
    <property type="entry name" value="GTP-bd"/>
</dbReference>
<dbReference type="InterPro" id="IPR014100">
    <property type="entry name" value="GTP-bd_Obg/CgtA"/>
</dbReference>
<dbReference type="InterPro" id="IPR036346">
    <property type="entry name" value="GTP-bd_prot_GTP1/OBG_C_sf"/>
</dbReference>
<dbReference type="InterPro" id="IPR006074">
    <property type="entry name" value="GTP1-OBG_CS"/>
</dbReference>
<dbReference type="InterPro" id="IPR006169">
    <property type="entry name" value="GTP1_OBG_dom"/>
</dbReference>
<dbReference type="InterPro" id="IPR036726">
    <property type="entry name" value="GTP1_OBG_dom_sf"/>
</dbReference>
<dbReference type="InterPro" id="IPR045086">
    <property type="entry name" value="OBG_GTPase"/>
</dbReference>
<dbReference type="InterPro" id="IPR015349">
    <property type="entry name" value="OCT_dom"/>
</dbReference>
<dbReference type="InterPro" id="IPR027417">
    <property type="entry name" value="P-loop_NTPase"/>
</dbReference>
<dbReference type="NCBIfam" id="TIGR02729">
    <property type="entry name" value="Obg_CgtA"/>
    <property type="match status" value="1"/>
</dbReference>
<dbReference type="NCBIfam" id="TIGR03595">
    <property type="entry name" value="Obg_CgtA_exten"/>
    <property type="match status" value="1"/>
</dbReference>
<dbReference type="NCBIfam" id="NF008954">
    <property type="entry name" value="PRK12296.1"/>
    <property type="match status" value="1"/>
</dbReference>
<dbReference type="NCBIfam" id="NF008955">
    <property type="entry name" value="PRK12297.1"/>
    <property type="match status" value="1"/>
</dbReference>
<dbReference type="NCBIfam" id="NF008956">
    <property type="entry name" value="PRK12299.1"/>
    <property type="match status" value="1"/>
</dbReference>
<dbReference type="PANTHER" id="PTHR11702">
    <property type="entry name" value="DEVELOPMENTALLY REGULATED GTP-BINDING PROTEIN-RELATED"/>
    <property type="match status" value="1"/>
</dbReference>
<dbReference type="PANTHER" id="PTHR11702:SF31">
    <property type="entry name" value="MITOCHONDRIAL RIBOSOME-ASSOCIATED GTPASE 2"/>
    <property type="match status" value="1"/>
</dbReference>
<dbReference type="Pfam" id="PF09269">
    <property type="entry name" value="DUF1967"/>
    <property type="match status" value="1"/>
</dbReference>
<dbReference type="Pfam" id="PF01018">
    <property type="entry name" value="GTP1_OBG"/>
    <property type="match status" value="1"/>
</dbReference>
<dbReference type="Pfam" id="PF01926">
    <property type="entry name" value="MMR_HSR1"/>
    <property type="match status" value="1"/>
</dbReference>
<dbReference type="PRINTS" id="PR00326">
    <property type="entry name" value="GTP1OBG"/>
</dbReference>
<dbReference type="SUPFAM" id="SSF102741">
    <property type="entry name" value="Obg GTP-binding protein C-terminal domain"/>
    <property type="match status" value="1"/>
</dbReference>
<dbReference type="SUPFAM" id="SSF82051">
    <property type="entry name" value="Obg GTP-binding protein N-terminal domain"/>
    <property type="match status" value="1"/>
</dbReference>
<dbReference type="SUPFAM" id="SSF52540">
    <property type="entry name" value="P-loop containing nucleoside triphosphate hydrolases"/>
    <property type="match status" value="1"/>
</dbReference>
<dbReference type="PROSITE" id="PS51710">
    <property type="entry name" value="G_OBG"/>
    <property type="match status" value="1"/>
</dbReference>
<dbReference type="PROSITE" id="PS00905">
    <property type="entry name" value="GTP1_OBG"/>
    <property type="match status" value="1"/>
</dbReference>
<dbReference type="PROSITE" id="PS51883">
    <property type="entry name" value="OBG"/>
    <property type="match status" value="1"/>
</dbReference>
<dbReference type="PROSITE" id="PS51881">
    <property type="entry name" value="OCT"/>
    <property type="match status" value="1"/>
</dbReference>
<reference key="1">
    <citation type="journal article" date="2011" name="Stand. Genomic Sci.">
        <title>Complete genome sequence of the filamentous gliding predatory bacterium Herpetosiphon aurantiacus type strain (114-95(T)).</title>
        <authorList>
            <person name="Kiss H."/>
            <person name="Nett M."/>
            <person name="Domin N."/>
            <person name="Martin K."/>
            <person name="Maresca J.A."/>
            <person name="Copeland A."/>
            <person name="Lapidus A."/>
            <person name="Lucas S."/>
            <person name="Berry K.W."/>
            <person name="Glavina Del Rio T."/>
            <person name="Dalin E."/>
            <person name="Tice H."/>
            <person name="Pitluck S."/>
            <person name="Richardson P."/>
            <person name="Bruce D."/>
            <person name="Goodwin L."/>
            <person name="Han C."/>
            <person name="Detter J.C."/>
            <person name="Schmutz J."/>
            <person name="Brettin T."/>
            <person name="Land M."/>
            <person name="Hauser L."/>
            <person name="Kyrpides N.C."/>
            <person name="Ivanova N."/>
            <person name="Goeker M."/>
            <person name="Woyke T."/>
            <person name="Klenk H.P."/>
            <person name="Bryant D.A."/>
        </authorList>
    </citation>
    <scope>NUCLEOTIDE SEQUENCE [LARGE SCALE GENOMIC DNA]</scope>
    <source>
        <strain>ATCC 23779 / DSM 785 / 114-95</strain>
    </source>
</reference>
<accession>A9AXD9</accession>
<gene>
    <name evidence="1" type="primary">obg</name>
    <name type="ordered locus">Haur_4227</name>
</gene>
<proteinExistence type="inferred from homology"/>
<evidence type="ECO:0000255" key="1">
    <source>
        <dbReference type="HAMAP-Rule" id="MF_01454"/>
    </source>
</evidence>
<evidence type="ECO:0000255" key="2">
    <source>
        <dbReference type="PROSITE-ProRule" id="PRU01229"/>
    </source>
</evidence>
<evidence type="ECO:0000255" key="3">
    <source>
        <dbReference type="PROSITE-ProRule" id="PRU01231"/>
    </source>
</evidence>